<gene>
    <name type="primary">yfdK</name>
    <name type="ordered locus">b2354</name>
    <name type="ordered locus">JW2350</name>
</gene>
<proteinExistence type="predicted"/>
<comment type="similarity">
    <text evidence="1">To E.coli YmfS.</text>
</comment>
<feature type="chain" id="PRO_0000169203" description="Uncharacterized protein YfdK">
    <location>
        <begin position="1"/>
        <end position="146"/>
    </location>
</feature>
<dbReference type="EMBL" id="U00096">
    <property type="protein sequence ID" value="AAC75413.1"/>
    <property type="molecule type" value="Genomic_DNA"/>
</dbReference>
<dbReference type="EMBL" id="AP009048">
    <property type="protein sequence ID" value="BAA16214.1"/>
    <property type="molecule type" value="Genomic_DNA"/>
</dbReference>
<dbReference type="PIR" id="G65008">
    <property type="entry name" value="G65008"/>
</dbReference>
<dbReference type="RefSeq" id="NP_416855.1">
    <property type="nucleotide sequence ID" value="NC_000913.3"/>
</dbReference>
<dbReference type="RefSeq" id="WP_001106835.1">
    <property type="nucleotide sequence ID" value="NZ_LN832404.1"/>
</dbReference>
<dbReference type="SMR" id="P77656"/>
<dbReference type="BioGRID" id="4260546">
    <property type="interactions" value="15"/>
</dbReference>
<dbReference type="DIP" id="DIP-11999N"/>
<dbReference type="FunCoup" id="P77656">
    <property type="interactions" value="20"/>
</dbReference>
<dbReference type="IntAct" id="P77656">
    <property type="interactions" value="5"/>
</dbReference>
<dbReference type="STRING" id="511145.b2354"/>
<dbReference type="PaxDb" id="511145-b2354"/>
<dbReference type="EnsemblBacteria" id="AAC75413">
    <property type="protein sequence ID" value="AAC75413"/>
    <property type="gene ID" value="b2354"/>
</dbReference>
<dbReference type="GeneID" id="948822"/>
<dbReference type="KEGG" id="ecj:JW2350"/>
<dbReference type="KEGG" id="eco:b2354"/>
<dbReference type="KEGG" id="ecoc:C3026_13095"/>
<dbReference type="PATRIC" id="fig|511145.12.peg.2449"/>
<dbReference type="EchoBASE" id="EB3887"/>
<dbReference type="eggNOG" id="ENOG5032TR7">
    <property type="taxonomic scope" value="Bacteria"/>
</dbReference>
<dbReference type="HOGENOM" id="CLU_094206_4_2_6"/>
<dbReference type="InParanoid" id="P77656"/>
<dbReference type="OMA" id="YINANSW"/>
<dbReference type="OrthoDB" id="8596093at2"/>
<dbReference type="PhylomeDB" id="P77656"/>
<dbReference type="BioCyc" id="EcoCyc:G7223-MONOMER"/>
<dbReference type="PRO" id="PR:P77656"/>
<dbReference type="Proteomes" id="UP000000625">
    <property type="component" value="Chromosome"/>
</dbReference>
<dbReference type="GO" id="GO:0006979">
    <property type="term" value="P:response to oxidative stress"/>
    <property type="evidence" value="ECO:0000315"/>
    <property type="project" value="EcoCyc"/>
</dbReference>
<dbReference type="InterPro" id="IPR003458">
    <property type="entry name" value="Phage_T4_Gp38_tail_assem"/>
</dbReference>
<dbReference type="InterPro" id="IPR051220">
    <property type="entry name" value="TFA_Chaperone"/>
</dbReference>
<dbReference type="PANTHER" id="PTHR34413:SF1">
    <property type="entry name" value="CYTOPLASMIC PROTEIN"/>
    <property type="match status" value="1"/>
</dbReference>
<dbReference type="PANTHER" id="PTHR34413">
    <property type="entry name" value="PROPHAGE TAIL FIBER ASSEMBLY PROTEIN HOMOLOG TFAE-RELATED-RELATED"/>
    <property type="match status" value="1"/>
</dbReference>
<dbReference type="Pfam" id="PF02413">
    <property type="entry name" value="Caudo_TAP"/>
    <property type="match status" value="1"/>
</dbReference>
<accession>P77656</accession>
<protein>
    <recommendedName>
        <fullName>Uncharacterized protein YfdK</fullName>
    </recommendedName>
</protein>
<sequence>MNYIYSATTNSFYPLEMKEDYTQAGSWPDDAVEVDEQVYIEFSGLPPKGKIRIAGENGFPAWSEIPPPTHEEQIAAAELKKQQLINQANDYMNSKQWAGKAAIGRLKGEELAQYNLWLDYLDALELVDTSSAPDIEWPTPPAVQAR</sequence>
<organism>
    <name type="scientific">Escherichia coli (strain K12)</name>
    <dbReference type="NCBI Taxonomy" id="83333"/>
    <lineage>
        <taxon>Bacteria</taxon>
        <taxon>Pseudomonadati</taxon>
        <taxon>Pseudomonadota</taxon>
        <taxon>Gammaproteobacteria</taxon>
        <taxon>Enterobacterales</taxon>
        <taxon>Enterobacteriaceae</taxon>
        <taxon>Escherichia</taxon>
    </lineage>
</organism>
<keyword id="KW-1185">Reference proteome</keyword>
<reference key="1">
    <citation type="journal article" date="1997" name="DNA Res.">
        <title>Construction of a contiguous 874-kb sequence of the Escherichia coli-K12 genome corresponding to 50.0-68.8 min on the linkage map and analysis of its sequence features.</title>
        <authorList>
            <person name="Yamamoto Y."/>
            <person name="Aiba H."/>
            <person name="Baba T."/>
            <person name="Hayashi K."/>
            <person name="Inada T."/>
            <person name="Isono K."/>
            <person name="Itoh T."/>
            <person name="Kimura S."/>
            <person name="Kitagawa M."/>
            <person name="Makino K."/>
            <person name="Miki T."/>
            <person name="Mitsuhashi N."/>
            <person name="Mizobuchi K."/>
            <person name="Mori H."/>
            <person name="Nakade S."/>
            <person name="Nakamura Y."/>
            <person name="Nashimoto H."/>
            <person name="Oshima T."/>
            <person name="Oyama S."/>
            <person name="Saito N."/>
            <person name="Sampei G."/>
            <person name="Satoh Y."/>
            <person name="Sivasundaram S."/>
            <person name="Tagami H."/>
            <person name="Takahashi H."/>
            <person name="Takeda J."/>
            <person name="Takemoto K."/>
            <person name="Uehara K."/>
            <person name="Wada C."/>
            <person name="Yamagata S."/>
            <person name="Horiuchi T."/>
        </authorList>
    </citation>
    <scope>NUCLEOTIDE SEQUENCE [LARGE SCALE GENOMIC DNA]</scope>
    <source>
        <strain>K12 / W3110 / ATCC 27325 / DSM 5911</strain>
    </source>
</reference>
<reference key="2">
    <citation type="journal article" date="1997" name="Science">
        <title>The complete genome sequence of Escherichia coli K-12.</title>
        <authorList>
            <person name="Blattner F.R."/>
            <person name="Plunkett G. III"/>
            <person name="Bloch C.A."/>
            <person name="Perna N.T."/>
            <person name="Burland V."/>
            <person name="Riley M."/>
            <person name="Collado-Vides J."/>
            <person name="Glasner J.D."/>
            <person name="Rode C.K."/>
            <person name="Mayhew G.F."/>
            <person name="Gregor J."/>
            <person name="Davis N.W."/>
            <person name="Kirkpatrick H.A."/>
            <person name="Goeden M.A."/>
            <person name="Rose D.J."/>
            <person name="Mau B."/>
            <person name="Shao Y."/>
        </authorList>
    </citation>
    <scope>NUCLEOTIDE SEQUENCE [LARGE SCALE GENOMIC DNA]</scope>
    <source>
        <strain>K12 / MG1655 / ATCC 47076</strain>
    </source>
</reference>
<reference key="3">
    <citation type="journal article" date="2006" name="Mol. Syst. Biol.">
        <title>Highly accurate genome sequences of Escherichia coli K-12 strains MG1655 and W3110.</title>
        <authorList>
            <person name="Hayashi K."/>
            <person name="Morooka N."/>
            <person name="Yamamoto Y."/>
            <person name="Fujita K."/>
            <person name="Isono K."/>
            <person name="Choi S."/>
            <person name="Ohtsubo E."/>
            <person name="Baba T."/>
            <person name="Wanner B.L."/>
            <person name="Mori H."/>
            <person name="Horiuchi T."/>
        </authorList>
    </citation>
    <scope>NUCLEOTIDE SEQUENCE [LARGE SCALE GENOMIC DNA]</scope>
    <source>
        <strain>K12 / W3110 / ATCC 27325 / DSM 5911</strain>
    </source>
</reference>
<name>YFDK_ECOLI</name>
<evidence type="ECO:0000305" key="1"/>